<name>CCD22_DANRE</name>
<feature type="chain" id="PRO_0000338400" description="Coiled-coil domain-containing protein 22">
    <location>
        <begin position="1"/>
        <end position="639"/>
    </location>
</feature>
<feature type="coiled-coil region" evidence="2">
    <location>
        <begin position="331"/>
        <end position="370"/>
    </location>
</feature>
<feature type="coiled-coil region" evidence="2">
    <location>
        <begin position="459"/>
        <end position="541"/>
    </location>
</feature>
<feature type="coiled-coil region" evidence="2">
    <location>
        <begin position="591"/>
        <end position="638"/>
    </location>
</feature>
<accession>Q4V909</accession>
<organism>
    <name type="scientific">Danio rerio</name>
    <name type="common">Zebrafish</name>
    <name type="synonym">Brachydanio rerio</name>
    <dbReference type="NCBI Taxonomy" id="7955"/>
    <lineage>
        <taxon>Eukaryota</taxon>
        <taxon>Metazoa</taxon>
        <taxon>Chordata</taxon>
        <taxon>Craniata</taxon>
        <taxon>Vertebrata</taxon>
        <taxon>Euteleostomi</taxon>
        <taxon>Actinopterygii</taxon>
        <taxon>Neopterygii</taxon>
        <taxon>Teleostei</taxon>
        <taxon>Ostariophysi</taxon>
        <taxon>Cypriniformes</taxon>
        <taxon>Danionidae</taxon>
        <taxon>Danioninae</taxon>
        <taxon>Danio</taxon>
    </lineage>
</organism>
<evidence type="ECO:0000250" key="1">
    <source>
        <dbReference type="UniProtKB" id="O60826"/>
    </source>
</evidence>
<evidence type="ECO:0000255" key="2"/>
<evidence type="ECO:0000305" key="3"/>
<gene>
    <name type="primary">ccdc22</name>
    <name type="ORF">zgc:114058</name>
</gene>
<sequence length="639" mass="71986">MEEVDRILIHSLRQAGTDIDEDVQSVKQFTSELIVEAVVRCLRVIDPAVGNGLSHSLPPGMSARFRLGMSLAQACQDVGFKGEIGYQTFLYSNEPEIRSLFMFLVERLPRESAEASDQPAGKSVLLQRAIAAQIKAQLSVPWLPPTCRLPVHRKTQSSGPCHSFHAQPLSLPCSLKVSSRKQPKEVQEYWRNYLLPVTAQPSQPASVPASLLENHISELSAAQEWESEWNSQGLLSRLTPEEYRSRKKARLQKRIEEQLRTAAQPRPDTHGATRSTSDLAELLQSFGGASTGGDVLTKGTRFTHTEKFTFTQEPEKAVQQMAAAASALPSSQQSEEDLKAQQEAELSALQQQLQQLSVQMEEVGGGIKQLTVSIQQVTDELQTREVTNAERENSVKIKRQTIDLLPDAENNLLKLQSLVESSSKRVVQLASQWEKHRVPLIDEHRRLKELCSNRESESSRKLSEIKDLHDKIRQSAEEAKKKESLYKQLLTEFETLSKDVSRSAYTIRILEIVGNIKKQKEEITKILSDTKDLQKEINGLTGKLDRTFAVTDELVFKDAKKDESVRKSYKYLAALHENCTQLIQTIEDTGTIMREIRDLEEQIETENGKRTVSNLEKILEDYKAIRQENSALAAKIREG</sequence>
<comment type="function">
    <text evidence="1">May be involved in regulation of NF-kappa-B signaling. May be involved in copper-dependent atp7a trafficking between the trans-Golgi network and vesicles in the cell periphery (By similarity).</text>
</comment>
<comment type="subcellular location">
    <subcellularLocation>
        <location evidence="1">Endosome</location>
    </subcellularLocation>
    <subcellularLocation>
        <location evidence="1">Cytoplasm</location>
        <location evidence="1">Cytoskeleton</location>
        <location evidence="1">Microtubule organizing center</location>
        <location evidence="1">Centrosome</location>
    </subcellularLocation>
</comment>
<comment type="similarity">
    <text evidence="3">Belongs to the CCDC22 family.</text>
</comment>
<keyword id="KW-0175">Coiled coil</keyword>
<keyword id="KW-0963">Cytoplasm</keyword>
<keyword id="KW-0206">Cytoskeleton</keyword>
<keyword id="KW-0967">Endosome</keyword>
<keyword id="KW-0653">Protein transport</keyword>
<keyword id="KW-1185">Reference proteome</keyword>
<keyword id="KW-0813">Transport</keyword>
<keyword id="KW-0833">Ubl conjugation pathway</keyword>
<proteinExistence type="evidence at transcript level"/>
<protein>
    <recommendedName>
        <fullName>Coiled-coil domain-containing protein 22</fullName>
    </recommendedName>
</protein>
<dbReference type="EMBL" id="BC097121">
    <property type="protein sequence ID" value="AAH97121.1"/>
    <property type="molecule type" value="mRNA"/>
</dbReference>
<dbReference type="RefSeq" id="NP_001020656.1">
    <property type="nucleotide sequence ID" value="NM_001025485.1"/>
</dbReference>
<dbReference type="SMR" id="Q4V909"/>
<dbReference type="FunCoup" id="Q4V909">
    <property type="interactions" value="768"/>
</dbReference>
<dbReference type="STRING" id="7955.ENSDARP00000090542"/>
<dbReference type="PaxDb" id="7955-ENSDARP00000090542"/>
<dbReference type="GeneID" id="556259"/>
<dbReference type="KEGG" id="dre:556259"/>
<dbReference type="AGR" id="ZFIN:ZDB-GENE-050913-93"/>
<dbReference type="CTD" id="28952"/>
<dbReference type="ZFIN" id="ZDB-GENE-050913-93">
    <property type="gene designation" value="ccdc22"/>
</dbReference>
<dbReference type="eggNOG" id="KOG1937">
    <property type="taxonomic scope" value="Eukaryota"/>
</dbReference>
<dbReference type="InParanoid" id="Q4V909"/>
<dbReference type="OrthoDB" id="10266736at2759"/>
<dbReference type="PhylomeDB" id="Q4V909"/>
<dbReference type="Reactome" id="R-DRE-8951664">
    <property type="pathway name" value="Neddylation"/>
</dbReference>
<dbReference type="PRO" id="PR:Q4V909"/>
<dbReference type="Proteomes" id="UP000000437">
    <property type="component" value="Chromosome 8"/>
</dbReference>
<dbReference type="GO" id="GO:0005813">
    <property type="term" value="C:centrosome"/>
    <property type="evidence" value="ECO:0000250"/>
    <property type="project" value="UniProtKB"/>
</dbReference>
<dbReference type="GO" id="GO:0005768">
    <property type="term" value="C:endosome"/>
    <property type="evidence" value="ECO:0007669"/>
    <property type="project" value="UniProtKB-SubCell"/>
</dbReference>
<dbReference type="GO" id="GO:0097602">
    <property type="term" value="F:cullin family protein binding"/>
    <property type="evidence" value="ECO:0000318"/>
    <property type="project" value="GO_Central"/>
</dbReference>
<dbReference type="GO" id="GO:2000060">
    <property type="term" value="P:positive regulation of ubiquitin-dependent protein catabolic process"/>
    <property type="evidence" value="ECO:0000318"/>
    <property type="project" value="GO_Central"/>
</dbReference>
<dbReference type="GO" id="GO:0015031">
    <property type="term" value="P:protein transport"/>
    <property type="evidence" value="ECO:0007669"/>
    <property type="project" value="UniProtKB-KW"/>
</dbReference>
<dbReference type="InterPro" id="IPR008530">
    <property type="entry name" value="CCDC22"/>
</dbReference>
<dbReference type="InterPro" id="IPR048348">
    <property type="entry name" value="CCDC22_CC"/>
</dbReference>
<dbReference type="InterPro" id="IPR048349">
    <property type="entry name" value="CCDC22_N"/>
</dbReference>
<dbReference type="PANTHER" id="PTHR15668:SF4">
    <property type="entry name" value="COILED-COIL DOMAIN-CONTAINING PROTEIN 22"/>
    <property type="match status" value="1"/>
</dbReference>
<dbReference type="PANTHER" id="PTHR15668">
    <property type="entry name" value="JM1 PROTEIN"/>
    <property type="match status" value="1"/>
</dbReference>
<dbReference type="Pfam" id="PF05667">
    <property type="entry name" value="CCDC22_CC"/>
    <property type="match status" value="1"/>
</dbReference>
<dbReference type="Pfam" id="PF21674">
    <property type="entry name" value="CCDC22_N"/>
    <property type="match status" value="1"/>
</dbReference>
<reference key="1">
    <citation type="submission" date="2005-06" db="EMBL/GenBank/DDBJ databases">
        <authorList>
            <consortium name="NIH - Zebrafish Gene Collection (ZGC) project"/>
        </authorList>
    </citation>
    <scope>NUCLEOTIDE SEQUENCE [LARGE SCALE MRNA]</scope>
    <source>
        <tissue>Embryo</tissue>
    </source>
</reference>